<evidence type="ECO:0000255" key="1">
    <source>
        <dbReference type="HAMAP-Rule" id="MF_01062"/>
    </source>
</evidence>
<reference key="1">
    <citation type="submission" date="2008-04" db="EMBL/GenBank/DDBJ databases">
        <title>Complete sequence of Yersinia pseudotuberculosis PB1/+.</title>
        <authorList>
            <person name="Copeland A."/>
            <person name="Lucas S."/>
            <person name="Lapidus A."/>
            <person name="Glavina del Rio T."/>
            <person name="Dalin E."/>
            <person name="Tice H."/>
            <person name="Bruce D."/>
            <person name="Goodwin L."/>
            <person name="Pitluck S."/>
            <person name="Munk A.C."/>
            <person name="Brettin T."/>
            <person name="Detter J.C."/>
            <person name="Han C."/>
            <person name="Tapia R."/>
            <person name="Schmutz J."/>
            <person name="Larimer F."/>
            <person name="Land M."/>
            <person name="Hauser L."/>
            <person name="Challacombe J.F."/>
            <person name="Green L."/>
            <person name="Lindler L.E."/>
            <person name="Nikolich M.P."/>
            <person name="Richardson P."/>
        </authorList>
    </citation>
    <scope>NUCLEOTIDE SEQUENCE [LARGE SCALE GENOMIC DNA]</scope>
    <source>
        <strain>PB1/+</strain>
    </source>
</reference>
<organism>
    <name type="scientific">Yersinia pseudotuberculosis serotype IB (strain PB1/+)</name>
    <dbReference type="NCBI Taxonomy" id="502801"/>
    <lineage>
        <taxon>Bacteria</taxon>
        <taxon>Pseudomonadati</taxon>
        <taxon>Pseudomonadota</taxon>
        <taxon>Gammaproteobacteria</taxon>
        <taxon>Enterobacterales</taxon>
        <taxon>Yersiniaceae</taxon>
        <taxon>Yersinia</taxon>
    </lineage>
</organism>
<sequence length="273" mass="30731">MERCVFYISDGTAITAEVLGHAVLSQFPINVTTFTLPFVENAARAQSVCKQINEIYQDTGVRPLVFYSIISLEVREIIQRSEGFCQDIVQALVAPLQGELGVPPQPVLNRTHGLTESNLDKYDARIAAIDYALAHDDGISLRNLDQAQVILLGVSRCGKTPTSLYLAMQFGIRAANYPFIADDMDNLQLPAALKPFQHKLFGLTINPERLAAIREERRENSRYASLRQCRMEVGEVEALFRKNQIRYLNSTNYSVEEISTKILDILGMSRRMF</sequence>
<name>PSRP_YERPB</name>
<proteinExistence type="inferred from homology"/>
<feature type="chain" id="PRO_1000136507" description="Putative phosphoenolpyruvate synthase regulatory protein">
    <location>
        <begin position="1"/>
        <end position="273"/>
    </location>
</feature>
<feature type="binding site" evidence="1">
    <location>
        <begin position="153"/>
        <end position="160"/>
    </location>
    <ligand>
        <name>ADP</name>
        <dbReference type="ChEBI" id="CHEBI:456216"/>
    </ligand>
</feature>
<dbReference type="EC" id="2.7.11.33" evidence="1"/>
<dbReference type="EC" id="2.7.4.28" evidence="1"/>
<dbReference type="EMBL" id="CP001048">
    <property type="protein sequence ID" value="ACC89355.1"/>
    <property type="molecule type" value="Genomic_DNA"/>
</dbReference>
<dbReference type="RefSeq" id="WP_002211814.1">
    <property type="nucleotide sequence ID" value="NZ_CP009780.1"/>
</dbReference>
<dbReference type="SMR" id="B2K5K4"/>
<dbReference type="KEGG" id="ypb:YPTS_2394"/>
<dbReference type="PATRIC" id="fig|502801.10.peg.1799"/>
<dbReference type="GO" id="GO:0043531">
    <property type="term" value="F:ADP binding"/>
    <property type="evidence" value="ECO:0007669"/>
    <property type="project" value="UniProtKB-UniRule"/>
</dbReference>
<dbReference type="GO" id="GO:0005524">
    <property type="term" value="F:ATP binding"/>
    <property type="evidence" value="ECO:0007669"/>
    <property type="project" value="InterPro"/>
</dbReference>
<dbReference type="GO" id="GO:0003677">
    <property type="term" value="F:DNA binding"/>
    <property type="evidence" value="ECO:0007669"/>
    <property type="project" value="InterPro"/>
</dbReference>
<dbReference type="GO" id="GO:0016776">
    <property type="term" value="F:phosphotransferase activity, phosphate group as acceptor"/>
    <property type="evidence" value="ECO:0007669"/>
    <property type="project" value="UniProtKB-UniRule"/>
</dbReference>
<dbReference type="GO" id="GO:0004674">
    <property type="term" value="F:protein serine/threonine kinase activity"/>
    <property type="evidence" value="ECO:0007669"/>
    <property type="project" value="UniProtKB-UniRule"/>
</dbReference>
<dbReference type="GO" id="GO:0006355">
    <property type="term" value="P:regulation of DNA-templated transcription"/>
    <property type="evidence" value="ECO:0007669"/>
    <property type="project" value="InterPro"/>
</dbReference>
<dbReference type="HAMAP" id="MF_01062">
    <property type="entry name" value="PSRP"/>
    <property type="match status" value="1"/>
</dbReference>
<dbReference type="InterPro" id="IPR005177">
    <property type="entry name" value="Kinase-pyrophosphorylase"/>
</dbReference>
<dbReference type="InterPro" id="IPR026530">
    <property type="entry name" value="PSRP"/>
</dbReference>
<dbReference type="InterPro" id="IPR008917">
    <property type="entry name" value="TF_DNA-bd_sf"/>
</dbReference>
<dbReference type="NCBIfam" id="NF003742">
    <property type="entry name" value="PRK05339.1"/>
    <property type="match status" value="1"/>
</dbReference>
<dbReference type="PANTHER" id="PTHR31756">
    <property type="entry name" value="PYRUVATE, PHOSPHATE DIKINASE REGULATORY PROTEIN 1, CHLOROPLASTIC"/>
    <property type="match status" value="1"/>
</dbReference>
<dbReference type="PANTHER" id="PTHR31756:SF3">
    <property type="entry name" value="PYRUVATE, PHOSPHATE DIKINASE REGULATORY PROTEIN 1, CHLOROPLASTIC"/>
    <property type="match status" value="1"/>
</dbReference>
<dbReference type="Pfam" id="PF03618">
    <property type="entry name" value="Kinase-PPPase"/>
    <property type="match status" value="1"/>
</dbReference>
<dbReference type="SUPFAM" id="SSF47454">
    <property type="entry name" value="A DNA-binding domain in eukaryotic transcription factors"/>
    <property type="match status" value="1"/>
</dbReference>
<comment type="function">
    <text evidence="1">Bifunctional serine/threonine kinase and phosphorylase involved in the regulation of the phosphoenolpyruvate synthase (PEPS) by catalyzing its phosphorylation/dephosphorylation.</text>
</comment>
<comment type="catalytic activity">
    <reaction evidence="1">
        <text>[pyruvate, water dikinase] + ADP = [pyruvate, water dikinase]-phosphate + AMP + H(+)</text>
        <dbReference type="Rhea" id="RHEA:46020"/>
        <dbReference type="Rhea" id="RHEA-COMP:11425"/>
        <dbReference type="Rhea" id="RHEA-COMP:11426"/>
        <dbReference type="ChEBI" id="CHEBI:15378"/>
        <dbReference type="ChEBI" id="CHEBI:43176"/>
        <dbReference type="ChEBI" id="CHEBI:68546"/>
        <dbReference type="ChEBI" id="CHEBI:456215"/>
        <dbReference type="ChEBI" id="CHEBI:456216"/>
        <dbReference type="EC" id="2.7.11.33"/>
    </reaction>
</comment>
<comment type="catalytic activity">
    <reaction evidence="1">
        <text>[pyruvate, water dikinase]-phosphate + phosphate + H(+) = [pyruvate, water dikinase] + diphosphate</text>
        <dbReference type="Rhea" id="RHEA:48580"/>
        <dbReference type="Rhea" id="RHEA-COMP:11425"/>
        <dbReference type="Rhea" id="RHEA-COMP:11426"/>
        <dbReference type="ChEBI" id="CHEBI:15378"/>
        <dbReference type="ChEBI" id="CHEBI:33019"/>
        <dbReference type="ChEBI" id="CHEBI:43176"/>
        <dbReference type="ChEBI" id="CHEBI:43474"/>
        <dbReference type="ChEBI" id="CHEBI:68546"/>
        <dbReference type="EC" id="2.7.4.28"/>
    </reaction>
</comment>
<comment type="similarity">
    <text evidence="1">Belongs to the pyruvate, phosphate/water dikinase regulatory protein family. PSRP subfamily.</text>
</comment>
<accession>B2K5K4</accession>
<keyword id="KW-0418">Kinase</keyword>
<keyword id="KW-0547">Nucleotide-binding</keyword>
<keyword id="KW-0723">Serine/threonine-protein kinase</keyword>
<keyword id="KW-0808">Transferase</keyword>
<gene>
    <name type="ordered locus">YPTS_2394</name>
</gene>
<protein>
    <recommendedName>
        <fullName evidence="1">Putative phosphoenolpyruvate synthase regulatory protein</fullName>
        <shortName evidence="1">PEP synthase regulatory protein</shortName>
        <shortName evidence="1">PSRP</shortName>
        <ecNumber evidence="1">2.7.11.33</ecNumber>
        <ecNumber evidence="1">2.7.4.28</ecNumber>
    </recommendedName>
    <alternativeName>
        <fullName evidence="1">Pyruvate, water dikinase regulatory protein</fullName>
    </alternativeName>
</protein>